<protein>
    <recommendedName>
        <fullName>tRNA(Ile)-lysidine synthase, plastid</fullName>
        <ecNumber>6.3.4.19</ecNumber>
    </recommendedName>
    <alternativeName>
        <fullName>tRNA(Ile)-2-lysyl-cytidine synthase</fullName>
    </alternativeName>
    <alternativeName>
        <fullName>tRNA(Ile)-lysidine synthetase</fullName>
    </alternativeName>
</protein>
<proteinExistence type="inferred from homology"/>
<organism>
    <name type="scientific">Helicosporidium sp. subsp. Simulium jonesii</name>
    <name type="common">Green alga</name>
    <dbReference type="NCBI Taxonomy" id="145475"/>
    <lineage>
        <taxon>Eukaryota</taxon>
        <taxon>Viridiplantae</taxon>
        <taxon>Chlorophyta</taxon>
        <taxon>core chlorophytes</taxon>
        <taxon>Trebouxiophyceae</taxon>
        <taxon>Chlorellales</taxon>
        <taxon>Chlorellaceae</taxon>
        <taxon>Helicosporidium</taxon>
    </lineage>
</organism>
<gene>
    <name type="primary">tilS</name>
    <name type="synonym">ycf62</name>
</gene>
<comment type="function">
    <text evidence="1">Ligates lysine onto the cytidine present at position 34 of the AUA codon-specific tRNA(Ile) that contains the anticodon CAU, in an ATP-dependent manner. Cytidine is converted to lysidine, thus changing the amino acid specificity of the tRNA from methionine to isoleucine (By similarity).</text>
</comment>
<comment type="catalytic activity">
    <reaction>
        <text>cytidine(34) in tRNA(Ile2) + L-lysine + ATP = lysidine(34) in tRNA(Ile2) + AMP + diphosphate + H(+)</text>
        <dbReference type="Rhea" id="RHEA:43744"/>
        <dbReference type="Rhea" id="RHEA-COMP:10625"/>
        <dbReference type="Rhea" id="RHEA-COMP:10670"/>
        <dbReference type="ChEBI" id="CHEBI:15378"/>
        <dbReference type="ChEBI" id="CHEBI:30616"/>
        <dbReference type="ChEBI" id="CHEBI:32551"/>
        <dbReference type="ChEBI" id="CHEBI:33019"/>
        <dbReference type="ChEBI" id="CHEBI:82748"/>
        <dbReference type="ChEBI" id="CHEBI:83665"/>
        <dbReference type="ChEBI" id="CHEBI:456215"/>
        <dbReference type="EC" id="6.3.4.19"/>
    </reaction>
</comment>
<comment type="subcellular location">
    <subcellularLocation>
        <location>Plastid</location>
    </subcellularLocation>
</comment>
<comment type="domain">
    <text>The N-terminal region contains the highly conserved SGGXDS motif, predicted to be a P-loop motif involved in ATP binding.</text>
</comment>
<comment type="similarity">
    <text evidence="3">Belongs to the tRNA(Ile)-lysidine synthase family.</text>
</comment>
<accession>Q2EEX9</accession>
<name>TILS_HELSJ</name>
<geneLocation type="non-photosynthetic plastid"/>
<reference key="1">
    <citation type="journal article" date="2006" name="BMC Biol.">
        <title>The complete plastid genome sequence of the parasitic green alga, Helicosporidium sp. is highly reduced and structured.</title>
        <authorList>
            <person name="de Koning A.P."/>
            <person name="Keeling P.J."/>
        </authorList>
    </citation>
    <scope>NUCLEOTIDE SEQUENCE [LARGE SCALE GENOMIC DNA]</scope>
</reference>
<sequence length="280" mass="33401">MLKNIIYSYITQLKNLLSKKLNVLCTFSAGQDSFFLLYCLIHIISNKNNKIKLQHNHHFLQSSNILSFWQCIKVASIFKIPLVINLLEINLANKDFMTENEARKWRYDSFLRNSLFQNEKPSIFIGHTGSDLLETFFWHFLRNSIIDYQLIKKKLLWNIPYYISNFSSVGYKNSSKVKIKLTNKKKKINCLINHNLMLNKAKKSFLKKDLTQLVLITRPLVNLHRQDIFLFRKNLKLPVITDKSNDNNYYYRNRIRNILFPIMRILFNKKTDKNLIKLFL</sequence>
<dbReference type="EC" id="6.3.4.19"/>
<dbReference type="EMBL" id="DQ398104">
    <property type="protein sequence ID" value="ABD33964.1"/>
    <property type="molecule type" value="Genomic_DNA"/>
</dbReference>
<dbReference type="RefSeq" id="YP_635915.1">
    <property type="nucleotide sequence ID" value="NC_008100.1"/>
</dbReference>
<dbReference type="SMR" id="Q2EEX9"/>
<dbReference type="GeneID" id="4100407"/>
<dbReference type="GO" id="GO:0009536">
    <property type="term" value="C:plastid"/>
    <property type="evidence" value="ECO:0007669"/>
    <property type="project" value="UniProtKB-SubCell"/>
</dbReference>
<dbReference type="GO" id="GO:0005524">
    <property type="term" value="F:ATP binding"/>
    <property type="evidence" value="ECO:0007669"/>
    <property type="project" value="UniProtKB-KW"/>
</dbReference>
<dbReference type="GO" id="GO:0032267">
    <property type="term" value="F:tRNA(Ile)-lysidine synthase activity"/>
    <property type="evidence" value="ECO:0007669"/>
    <property type="project" value="UniProtKB-EC"/>
</dbReference>
<dbReference type="GO" id="GO:0006400">
    <property type="term" value="P:tRNA modification"/>
    <property type="evidence" value="ECO:0007669"/>
    <property type="project" value="UniProtKB-ARBA"/>
</dbReference>
<dbReference type="CDD" id="cd01992">
    <property type="entry name" value="TilS_N"/>
    <property type="match status" value="1"/>
</dbReference>
<dbReference type="Gene3D" id="3.40.50.620">
    <property type="entry name" value="HUPs"/>
    <property type="match status" value="1"/>
</dbReference>
<dbReference type="InterPro" id="IPR014729">
    <property type="entry name" value="Rossmann-like_a/b/a_fold"/>
</dbReference>
<dbReference type="InterPro" id="IPR011063">
    <property type="entry name" value="TilS/TtcA_N"/>
</dbReference>
<dbReference type="InterPro" id="IPR012094">
    <property type="entry name" value="tRNA_Ile_lys_synt"/>
</dbReference>
<dbReference type="InterPro" id="IPR012795">
    <property type="entry name" value="tRNA_Ile_lys_synt_N"/>
</dbReference>
<dbReference type="PANTHER" id="PTHR43033">
    <property type="entry name" value="TRNA(ILE)-LYSIDINE SYNTHASE-RELATED"/>
    <property type="match status" value="1"/>
</dbReference>
<dbReference type="PANTHER" id="PTHR43033:SF1">
    <property type="entry name" value="TRNA(ILE)-LYSIDINE SYNTHASE-RELATED"/>
    <property type="match status" value="1"/>
</dbReference>
<dbReference type="Pfam" id="PF01171">
    <property type="entry name" value="ATP_bind_3"/>
    <property type="match status" value="2"/>
</dbReference>
<dbReference type="SUPFAM" id="SSF52402">
    <property type="entry name" value="Adenine nucleotide alpha hydrolases-like"/>
    <property type="match status" value="1"/>
</dbReference>
<keyword id="KW-0067">ATP-binding</keyword>
<keyword id="KW-0436">Ligase</keyword>
<keyword id="KW-0547">Nucleotide-binding</keyword>
<keyword id="KW-0934">Plastid</keyword>
<keyword id="KW-0819">tRNA processing</keyword>
<evidence type="ECO:0000250" key="1"/>
<evidence type="ECO:0000255" key="2"/>
<evidence type="ECO:0000305" key="3"/>
<feature type="chain" id="PRO_0000296326" description="tRNA(Ile)-lysidine synthase, plastid">
    <location>
        <begin position="1"/>
        <end position="280"/>
    </location>
</feature>
<feature type="binding site" evidence="2">
    <location>
        <begin position="28"/>
        <end position="33"/>
    </location>
    <ligand>
        <name>ATP</name>
        <dbReference type="ChEBI" id="CHEBI:30616"/>
    </ligand>
</feature>